<dbReference type="EC" id="3.1.26.4" evidence="1"/>
<dbReference type="EMBL" id="CP000087">
    <property type="protein sequence ID" value="ABE04592.1"/>
    <property type="molecule type" value="Genomic_DNA"/>
</dbReference>
<dbReference type="RefSeq" id="WP_011477183.1">
    <property type="nucleotide sequence ID" value="NC_007940.1"/>
</dbReference>
<dbReference type="SMR" id="Q1RJ72"/>
<dbReference type="KEGG" id="rbe:RBE_0511"/>
<dbReference type="eggNOG" id="COG0164">
    <property type="taxonomic scope" value="Bacteria"/>
</dbReference>
<dbReference type="HOGENOM" id="CLU_036532_3_1_5"/>
<dbReference type="OrthoDB" id="9803420at2"/>
<dbReference type="Proteomes" id="UP000001951">
    <property type="component" value="Chromosome"/>
</dbReference>
<dbReference type="GO" id="GO:0005737">
    <property type="term" value="C:cytoplasm"/>
    <property type="evidence" value="ECO:0007669"/>
    <property type="project" value="UniProtKB-SubCell"/>
</dbReference>
<dbReference type="GO" id="GO:0032299">
    <property type="term" value="C:ribonuclease H2 complex"/>
    <property type="evidence" value="ECO:0007669"/>
    <property type="project" value="TreeGrafter"/>
</dbReference>
<dbReference type="GO" id="GO:0030145">
    <property type="term" value="F:manganese ion binding"/>
    <property type="evidence" value="ECO:0007669"/>
    <property type="project" value="UniProtKB-UniRule"/>
</dbReference>
<dbReference type="GO" id="GO:0003723">
    <property type="term" value="F:RNA binding"/>
    <property type="evidence" value="ECO:0007669"/>
    <property type="project" value="InterPro"/>
</dbReference>
<dbReference type="GO" id="GO:0004523">
    <property type="term" value="F:RNA-DNA hybrid ribonuclease activity"/>
    <property type="evidence" value="ECO:0007669"/>
    <property type="project" value="UniProtKB-UniRule"/>
</dbReference>
<dbReference type="GO" id="GO:0043137">
    <property type="term" value="P:DNA replication, removal of RNA primer"/>
    <property type="evidence" value="ECO:0007669"/>
    <property type="project" value="TreeGrafter"/>
</dbReference>
<dbReference type="GO" id="GO:0006298">
    <property type="term" value="P:mismatch repair"/>
    <property type="evidence" value="ECO:0007669"/>
    <property type="project" value="TreeGrafter"/>
</dbReference>
<dbReference type="CDD" id="cd07182">
    <property type="entry name" value="RNase_HII_bacteria_HII_like"/>
    <property type="match status" value="1"/>
</dbReference>
<dbReference type="Gene3D" id="3.30.420.10">
    <property type="entry name" value="Ribonuclease H-like superfamily/Ribonuclease H"/>
    <property type="match status" value="1"/>
</dbReference>
<dbReference type="HAMAP" id="MF_00052_B">
    <property type="entry name" value="RNase_HII_B"/>
    <property type="match status" value="1"/>
</dbReference>
<dbReference type="InterPro" id="IPR022898">
    <property type="entry name" value="RNase_HII"/>
</dbReference>
<dbReference type="InterPro" id="IPR001352">
    <property type="entry name" value="RNase_HII/HIII"/>
</dbReference>
<dbReference type="InterPro" id="IPR024567">
    <property type="entry name" value="RNase_HII/HIII_dom"/>
</dbReference>
<dbReference type="InterPro" id="IPR012337">
    <property type="entry name" value="RNaseH-like_sf"/>
</dbReference>
<dbReference type="InterPro" id="IPR036397">
    <property type="entry name" value="RNaseH_sf"/>
</dbReference>
<dbReference type="NCBIfam" id="NF000594">
    <property type="entry name" value="PRK00015.1-1"/>
    <property type="match status" value="1"/>
</dbReference>
<dbReference type="NCBIfam" id="NF000595">
    <property type="entry name" value="PRK00015.1-3"/>
    <property type="match status" value="1"/>
</dbReference>
<dbReference type="PANTHER" id="PTHR10954">
    <property type="entry name" value="RIBONUCLEASE H2 SUBUNIT A"/>
    <property type="match status" value="1"/>
</dbReference>
<dbReference type="PANTHER" id="PTHR10954:SF18">
    <property type="entry name" value="RIBONUCLEASE HII"/>
    <property type="match status" value="1"/>
</dbReference>
<dbReference type="Pfam" id="PF01351">
    <property type="entry name" value="RNase_HII"/>
    <property type="match status" value="1"/>
</dbReference>
<dbReference type="SUPFAM" id="SSF53098">
    <property type="entry name" value="Ribonuclease H-like"/>
    <property type="match status" value="1"/>
</dbReference>
<dbReference type="PROSITE" id="PS51975">
    <property type="entry name" value="RNASE_H_2"/>
    <property type="match status" value="1"/>
</dbReference>
<evidence type="ECO:0000255" key="1">
    <source>
        <dbReference type="HAMAP-Rule" id="MF_00052"/>
    </source>
</evidence>
<evidence type="ECO:0000255" key="2">
    <source>
        <dbReference type="PROSITE-ProRule" id="PRU01319"/>
    </source>
</evidence>
<name>RNH2_RICBR</name>
<protein>
    <recommendedName>
        <fullName evidence="1">Ribonuclease HII</fullName>
        <shortName evidence="1">RNase HII</shortName>
        <ecNumber evidence="1">3.1.26.4</ecNumber>
    </recommendedName>
</protein>
<accession>Q1RJ72</accession>
<reference key="1">
    <citation type="journal article" date="2006" name="PLoS Genet.">
        <title>Genome sequence of Rickettsia bellii illuminates the role of amoebae in gene exchanges between intracellular pathogens.</title>
        <authorList>
            <person name="Ogata H."/>
            <person name="La Scola B."/>
            <person name="Audic S."/>
            <person name="Renesto P."/>
            <person name="Blanc G."/>
            <person name="Robert C."/>
            <person name="Fournier P.-E."/>
            <person name="Claverie J.-M."/>
            <person name="Raoult D."/>
        </authorList>
    </citation>
    <scope>NUCLEOTIDE SEQUENCE [LARGE SCALE GENOMIC DNA]</scope>
    <source>
        <strain>RML369-C</strain>
    </source>
</reference>
<sequence>MEIDILHFEKKYPNFILAGIDEAGRGPLAGPVVAAAVIVDQNNIIAGIKDSKKLSKKKRELLYEQITANYIWATGIISHTEIDKINILEATKKACILAAENLSTKPEIVLVDGNMQFSDKRFISIINGDNLSLSIAAASIIAKVTRDRLMLELSNEFPQYLWHKNSGYGTKEHAQAIKEYGLSPYHRLSFTKALYK</sequence>
<comment type="function">
    <text evidence="1">Endonuclease that specifically degrades the RNA of RNA-DNA hybrids.</text>
</comment>
<comment type="catalytic activity">
    <reaction evidence="1">
        <text>Endonucleolytic cleavage to 5'-phosphomonoester.</text>
        <dbReference type="EC" id="3.1.26.4"/>
    </reaction>
</comment>
<comment type="cofactor">
    <cofactor evidence="1">
        <name>Mn(2+)</name>
        <dbReference type="ChEBI" id="CHEBI:29035"/>
    </cofactor>
    <cofactor evidence="1">
        <name>Mg(2+)</name>
        <dbReference type="ChEBI" id="CHEBI:18420"/>
    </cofactor>
    <text evidence="1">Manganese or magnesium. Binds 1 divalent metal ion per monomer in the absence of substrate. May bind a second metal ion after substrate binding.</text>
</comment>
<comment type="subcellular location">
    <subcellularLocation>
        <location evidence="1">Cytoplasm</location>
    </subcellularLocation>
</comment>
<comment type="similarity">
    <text evidence="1">Belongs to the RNase HII family.</text>
</comment>
<proteinExistence type="inferred from homology"/>
<keyword id="KW-0963">Cytoplasm</keyword>
<keyword id="KW-0255">Endonuclease</keyword>
<keyword id="KW-0378">Hydrolase</keyword>
<keyword id="KW-0464">Manganese</keyword>
<keyword id="KW-0479">Metal-binding</keyword>
<keyword id="KW-0540">Nuclease</keyword>
<gene>
    <name evidence="1" type="primary">rnhB</name>
    <name type="ordered locus">RBE_0511</name>
</gene>
<feature type="chain" id="PRO_0000277913" description="Ribonuclease HII">
    <location>
        <begin position="1"/>
        <end position="196"/>
    </location>
</feature>
<feature type="domain" description="RNase H type-2" evidence="2">
    <location>
        <begin position="15"/>
        <end position="196"/>
    </location>
</feature>
<feature type="binding site" evidence="1">
    <location>
        <position position="21"/>
    </location>
    <ligand>
        <name>a divalent metal cation</name>
        <dbReference type="ChEBI" id="CHEBI:60240"/>
    </ligand>
</feature>
<feature type="binding site" evidence="1">
    <location>
        <position position="22"/>
    </location>
    <ligand>
        <name>a divalent metal cation</name>
        <dbReference type="ChEBI" id="CHEBI:60240"/>
    </ligand>
</feature>
<feature type="binding site" evidence="1">
    <location>
        <position position="112"/>
    </location>
    <ligand>
        <name>a divalent metal cation</name>
        <dbReference type="ChEBI" id="CHEBI:60240"/>
    </ligand>
</feature>
<organism>
    <name type="scientific">Rickettsia bellii (strain RML369-C)</name>
    <dbReference type="NCBI Taxonomy" id="336407"/>
    <lineage>
        <taxon>Bacteria</taxon>
        <taxon>Pseudomonadati</taxon>
        <taxon>Pseudomonadota</taxon>
        <taxon>Alphaproteobacteria</taxon>
        <taxon>Rickettsiales</taxon>
        <taxon>Rickettsiaceae</taxon>
        <taxon>Rickettsieae</taxon>
        <taxon>Rickettsia</taxon>
        <taxon>belli group</taxon>
    </lineage>
</organism>